<comment type="function">
    <text evidence="1">Catalyzes the prenylation of para-hydroxybenzoate (PHB) with an all-trans polyprenyl group. Mediates the second step in the final reaction sequence of ubiquinone-8 (UQ-8) biosynthesis, which is the condensation of the polyisoprenoid side chain with PHB, generating the first membrane-bound Q intermediate 3-octaprenyl-4-hydroxybenzoate.</text>
</comment>
<comment type="catalytic activity">
    <reaction evidence="1">
        <text>all-trans-octaprenyl diphosphate + 4-hydroxybenzoate = 4-hydroxy-3-(all-trans-octaprenyl)benzoate + diphosphate</text>
        <dbReference type="Rhea" id="RHEA:27782"/>
        <dbReference type="ChEBI" id="CHEBI:1617"/>
        <dbReference type="ChEBI" id="CHEBI:17879"/>
        <dbReference type="ChEBI" id="CHEBI:33019"/>
        <dbReference type="ChEBI" id="CHEBI:57711"/>
        <dbReference type="EC" id="2.5.1.39"/>
    </reaction>
</comment>
<comment type="cofactor">
    <cofactor evidence="1">
        <name>Mg(2+)</name>
        <dbReference type="ChEBI" id="CHEBI:18420"/>
    </cofactor>
</comment>
<comment type="pathway">
    <text evidence="1">Cofactor biosynthesis; ubiquinone biosynthesis.</text>
</comment>
<comment type="subcellular location">
    <subcellularLocation>
        <location evidence="1">Cell inner membrane</location>
        <topology evidence="1">Multi-pass membrane protein</topology>
    </subcellularLocation>
</comment>
<comment type="similarity">
    <text evidence="1">Belongs to the UbiA prenyltransferase family.</text>
</comment>
<accession>Q7VQU0</accession>
<organism>
    <name type="scientific">Blochmanniella floridana</name>
    <dbReference type="NCBI Taxonomy" id="203907"/>
    <lineage>
        <taxon>Bacteria</taxon>
        <taxon>Pseudomonadati</taxon>
        <taxon>Pseudomonadota</taxon>
        <taxon>Gammaproteobacteria</taxon>
        <taxon>Enterobacterales</taxon>
        <taxon>Enterobacteriaceae</taxon>
        <taxon>ant endosymbionts</taxon>
        <taxon>Candidatus Blochmanniella</taxon>
    </lineage>
</organism>
<dbReference type="EC" id="2.5.1.39" evidence="1"/>
<dbReference type="EMBL" id="BX248583">
    <property type="protein sequence ID" value="CAD83553.1"/>
    <property type="molecule type" value="Genomic_DNA"/>
</dbReference>
<dbReference type="SMR" id="Q7VQU0"/>
<dbReference type="STRING" id="203907.Bfl025"/>
<dbReference type="KEGG" id="bfl:Bfl025"/>
<dbReference type="eggNOG" id="COG0382">
    <property type="taxonomic scope" value="Bacteria"/>
</dbReference>
<dbReference type="HOGENOM" id="CLU_034879_1_0_6"/>
<dbReference type="OrthoDB" id="9782418at2"/>
<dbReference type="UniPathway" id="UPA00232"/>
<dbReference type="Proteomes" id="UP000002192">
    <property type="component" value="Chromosome"/>
</dbReference>
<dbReference type="GO" id="GO:0005886">
    <property type="term" value="C:plasma membrane"/>
    <property type="evidence" value="ECO:0007669"/>
    <property type="project" value="UniProtKB-SubCell"/>
</dbReference>
<dbReference type="GO" id="GO:0008412">
    <property type="term" value="F:4-hydroxybenzoate polyprenyltransferase activity"/>
    <property type="evidence" value="ECO:0007669"/>
    <property type="project" value="UniProtKB-UniRule"/>
</dbReference>
<dbReference type="GO" id="GO:0006744">
    <property type="term" value="P:ubiquinone biosynthetic process"/>
    <property type="evidence" value="ECO:0007669"/>
    <property type="project" value="UniProtKB-UniRule"/>
</dbReference>
<dbReference type="CDD" id="cd13959">
    <property type="entry name" value="PT_UbiA_COQ2"/>
    <property type="match status" value="1"/>
</dbReference>
<dbReference type="FunFam" id="1.20.120.1780:FF:000001">
    <property type="entry name" value="4-hydroxybenzoate octaprenyltransferase"/>
    <property type="match status" value="1"/>
</dbReference>
<dbReference type="Gene3D" id="1.10.357.140">
    <property type="entry name" value="UbiA prenyltransferase"/>
    <property type="match status" value="1"/>
</dbReference>
<dbReference type="Gene3D" id="1.20.120.1780">
    <property type="entry name" value="UbiA prenyltransferase"/>
    <property type="match status" value="1"/>
</dbReference>
<dbReference type="HAMAP" id="MF_01635">
    <property type="entry name" value="UbiA"/>
    <property type="match status" value="1"/>
</dbReference>
<dbReference type="InterPro" id="IPR006370">
    <property type="entry name" value="HB_polyprenyltransferase-like"/>
</dbReference>
<dbReference type="InterPro" id="IPR039653">
    <property type="entry name" value="Prenyltransferase"/>
</dbReference>
<dbReference type="InterPro" id="IPR000537">
    <property type="entry name" value="UbiA_prenyltransferase"/>
</dbReference>
<dbReference type="InterPro" id="IPR030470">
    <property type="entry name" value="UbiA_prenylTrfase_CS"/>
</dbReference>
<dbReference type="InterPro" id="IPR044878">
    <property type="entry name" value="UbiA_sf"/>
</dbReference>
<dbReference type="NCBIfam" id="TIGR01474">
    <property type="entry name" value="ubiA_proteo"/>
    <property type="match status" value="1"/>
</dbReference>
<dbReference type="PANTHER" id="PTHR11048:SF28">
    <property type="entry name" value="4-HYDROXYBENZOATE POLYPRENYLTRANSFERASE, MITOCHONDRIAL"/>
    <property type="match status" value="1"/>
</dbReference>
<dbReference type="PANTHER" id="PTHR11048">
    <property type="entry name" value="PRENYLTRANSFERASES"/>
    <property type="match status" value="1"/>
</dbReference>
<dbReference type="Pfam" id="PF01040">
    <property type="entry name" value="UbiA"/>
    <property type="match status" value="1"/>
</dbReference>
<dbReference type="PROSITE" id="PS00943">
    <property type="entry name" value="UBIA"/>
    <property type="match status" value="1"/>
</dbReference>
<gene>
    <name evidence="1" type="primary">ubiA</name>
    <name type="ordered locus">Bfl025</name>
</gene>
<sequence>MYKRCIGFIKLMRVHQPVGFFLLLWPTLWALWITNRGIPDFIVLSLFIVGVMCMRSAGCVINDYIDYDIDMCVQRTIRRPIVIGSVKKQEALWVFFILILIALIVVCVFNNIIAVFLSLIVLGLSIIYPYLKRYIYLPQLVLGIIFSWSILIVYTVMNCAVNKTTWLLFLANTIWVVLYDTEYAMVDRDDDKCIGIKSSALLFGKIDKIVIGILQLLTVFILYIIGIVEQLPIIFYLFSIVGASILFIWQQVLIFNRNREKCLWAFLSNSYVGMLIFVGIVLSF</sequence>
<keyword id="KW-0997">Cell inner membrane</keyword>
<keyword id="KW-1003">Cell membrane</keyword>
<keyword id="KW-0460">Magnesium</keyword>
<keyword id="KW-0472">Membrane</keyword>
<keyword id="KW-1185">Reference proteome</keyword>
<keyword id="KW-0808">Transferase</keyword>
<keyword id="KW-0812">Transmembrane</keyword>
<keyword id="KW-1133">Transmembrane helix</keyword>
<keyword id="KW-0831">Ubiquinone biosynthesis</keyword>
<proteinExistence type="inferred from homology"/>
<feature type="chain" id="PRO_0000262779" description="4-hydroxybenzoate octaprenyltransferase">
    <location>
        <begin position="1"/>
        <end position="284"/>
    </location>
</feature>
<feature type="transmembrane region" description="Helical" evidence="1">
    <location>
        <begin position="14"/>
        <end position="34"/>
    </location>
</feature>
<feature type="transmembrane region" description="Helical" evidence="1">
    <location>
        <begin position="41"/>
        <end position="61"/>
    </location>
</feature>
<feature type="transmembrane region" description="Helical" evidence="1">
    <location>
        <begin position="93"/>
        <end position="113"/>
    </location>
</feature>
<feature type="transmembrane region" description="Helical" evidence="1">
    <location>
        <begin position="134"/>
        <end position="154"/>
    </location>
</feature>
<feature type="transmembrane region" description="Helical" evidence="1">
    <location>
        <begin position="166"/>
        <end position="186"/>
    </location>
</feature>
<feature type="transmembrane region" description="Helical" evidence="1">
    <location>
        <begin position="209"/>
        <end position="229"/>
    </location>
</feature>
<feature type="transmembrane region" description="Helical" evidence="1">
    <location>
        <begin position="233"/>
        <end position="253"/>
    </location>
</feature>
<feature type="transmembrane region" description="Helical" evidence="1">
    <location>
        <begin position="262"/>
        <end position="282"/>
    </location>
</feature>
<name>UBIA_BLOFL</name>
<protein>
    <recommendedName>
        <fullName evidence="1">4-hydroxybenzoate octaprenyltransferase</fullName>
        <ecNumber evidence="1">2.5.1.39</ecNumber>
    </recommendedName>
    <alternativeName>
        <fullName evidence="1">4-HB polyprenyltransferase</fullName>
    </alternativeName>
</protein>
<reference key="1">
    <citation type="journal article" date="2003" name="Proc. Natl. Acad. Sci. U.S.A.">
        <title>The genome sequence of Blochmannia floridanus: comparative analysis of reduced genomes.</title>
        <authorList>
            <person name="Gil R."/>
            <person name="Silva F.J."/>
            <person name="Zientz E."/>
            <person name="Delmotte F."/>
            <person name="Gonzalez-Candelas F."/>
            <person name="Latorre A."/>
            <person name="Rausell C."/>
            <person name="Kamerbeek J."/>
            <person name="Gadau J."/>
            <person name="Hoelldobler B."/>
            <person name="van Ham R.C.H.J."/>
            <person name="Gross R."/>
            <person name="Moya A."/>
        </authorList>
    </citation>
    <scope>NUCLEOTIDE SEQUENCE [LARGE SCALE GENOMIC DNA]</scope>
</reference>
<evidence type="ECO:0000255" key="1">
    <source>
        <dbReference type="HAMAP-Rule" id="MF_01635"/>
    </source>
</evidence>